<proteinExistence type="inferred from homology"/>
<sequence>MQNSGRDLWQNQSGYMSSLQQGLNKSNMVGASTSHGKTPMLMANNDVFTIAPYRTRKDNARVSVLDKYEIIGYIAAGTYGKVYKAKSRQSSKSSSSTGSDSLAQDTKPTTEFSNTSSLQNAGTYGDMMGAHGPNSNNISAGGNTNPELSTRNNPNNPRVPTSTIISGDKRNSENTDNRRKAETTMYYAIKKFKTEKDGIEQLHYTGISQSACREMALCRELDNNHLTKLVEIFLQKKSIYMVYEFAEHDLLQIIHFHSHPEKRMIPPRMIRSIMWQILDGVSYLHQNWVLHRDLKPANIMVTMDGVVKIGDLGLARKFSNMLQTMYTGDKVVVTIWYRAPELLLGARHYTPAIDLWAVGCIFAELIGLQPIFKGEEAKMDSKKTVPFQANQLQRILKILGTPTPKSWPHLQKYPEYEQLSKFPKYRDNLPGWFHSAGGRDKHALSLLYHLLNYNPIERIDAINALDHSYFTHGDMPVCENVFEGLNYKYPARRIHTNDNDILNLGLHKPKVPAKVVQPTMNNSTATLGGLGVNKRILAAAAAAAAAVSGNSSSQSSRNMEPMKKKRK</sequence>
<organism>
    <name type="scientific">Candida glabrata (strain ATCC 2001 / BCRC 20586 / JCM 3761 / NBRC 0622 / NRRL Y-65 / CBS 138)</name>
    <name type="common">Yeast</name>
    <name type="synonym">Nakaseomyces glabratus</name>
    <dbReference type="NCBI Taxonomy" id="284593"/>
    <lineage>
        <taxon>Eukaryota</taxon>
        <taxon>Fungi</taxon>
        <taxon>Dikarya</taxon>
        <taxon>Ascomycota</taxon>
        <taxon>Saccharomycotina</taxon>
        <taxon>Saccharomycetes</taxon>
        <taxon>Saccharomycetales</taxon>
        <taxon>Saccharomycetaceae</taxon>
        <taxon>Nakaseomyces</taxon>
    </lineage>
</organism>
<reference key="1">
    <citation type="journal article" date="2004" name="Nature">
        <title>Genome evolution in yeasts.</title>
        <authorList>
            <person name="Dujon B."/>
            <person name="Sherman D."/>
            <person name="Fischer G."/>
            <person name="Durrens P."/>
            <person name="Casaregola S."/>
            <person name="Lafontaine I."/>
            <person name="de Montigny J."/>
            <person name="Marck C."/>
            <person name="Neuveglise C."/>
            <person name="Talla E."/>
            <person name="Goffard N."/>
            <person name="Frangeul L."/>
            <person name="Aigle M."/>
            <person name="Anthouard V."/>
            <person name="Babour A."/>
            <person name="Barbe V."/>
            <person name="Barnay S."/>
            <person name="Blanchin S."/>
            <person name="Beckerich J.-M."/>
            <person name="Beyne E."/>
            <person name="Bleykasten C."/>
            <person name="Boisrame A."/>
            <person name="Boyer J."/>
            <person name="Cattolico L."/>
            <person name="Confanioleri F."/>
            <person name="de Daruvar A."/>
            <person name="Despons L."/>
            <person name="Fabre E."/>
            <person name="Fairhead C."/>
            <person name="Ferry-Dumazet H."/>
            <person name="Groppi A."/>
            <person name="Hantraye F."/>
            <person name="Hennequin C."/>
            <person name="Jauniaux N."/>
            <person name="Joyet P."/>
            <person name="Kachouri R."/>
            <person name="Kerrest A."/>
            <person name="Koszul R."/>
            <person name="Lemaire M."/>
            <person name="Lesur I."/>
            <person name="Ma L."/>
            <person name="Muller H."/>
            <person name="Nicaud J.-M."/>
            <person name="Nikolski M."/>
            <person name="Oztas S."/>
            <person name="Ozier-Kalogeropoulos O."/>
            <person name="Pellenz S."/>
            <person name="Potier S."/>
            <person name="Richard G.-F."/>
            <person name="Straub M.-L."/>
            <person name="Suleau A."/>
            <person name="Swennen D."/>
            <person name="Tekaia F."/>
            <person name="Wesolowski-Louvel M."/>
            <person name="Westhof E."/>
            <person name="Wirth B."/>
            <person name="Zeniou-Meyer M."/>
            <person name="Zivanovic Y."/>
            <person name="Bolotin-Fukuhara M."/>
            <person name="Thierry A."/>
            <person name="Bouchier C."/>
            <person name="Caudron B."/>
            <person name="Scarpelli C."/>
            <person name="Gaillardin C."/>
            <person name="Weissenbach J."/>
            <person name="Wincker P."/>
            <person name="Souciet J.-L."/>
        </authorList>
    </citation>
    <scope>NUCLEOTIDE SEQUENCE [LARGE SCALE GENOMIC DNA]</scope>
    <source>
        <strain>ATCC 2001 / BCRC 20586 / JCM 3761 / NBRC 0622 / NRRL Y-65 / CBS 138</strain>
    </source>
</reference>
<gene>
    <name type="primary">SSN3</name>
    <name type="synonym">CDK8</name>
    <name type="ordered locus">CAGL0L12650g</name>
</gene>
<feature type="chain" id="PRO_0000312939" description="Serine/threonine-protein kinase SSN3">
    <location>
        <begin position="1"/>
        <end position="567"/>
    </location>
</feature>
<feature type="domain" description="Protein kinase" evidence="2">
    <location>
        <begin position="68"/>
        <end position="470"/>
    </location>
</feature>
<feature type="region of interest" description="Disordered" evidence="4">
    <location>
        <begin position="88"/>
        <end position="179"/>
    </location>
</feature>
<feature type="region of interest" description="Disordered" evidence="4">
    <location>
        <begin position="546"/>
        <end position="567"/>
    </location>
</feature>
<feature type="compositionally biased region" description="Low complexity" evidence="4">
    <location>
        <begin position="90"/>
        <end position="101"/>
    </location>
</feature>
<feature type="compositionally biased region" description="Polar residues" evidence="4">
    <location>
        <begin position="102"/>
        <end position="122"/>
    </location>
</feature>
<feature type="compositionally biased region" description="Polar residues" evidence="4">
    <location>
        <begin position="133"/>
        <end position="150"/>
    </location>
</feature>
<feature type="compositionally biased region" description="Basic and acidic residues" evidence="4">
    <location>
        <begin position="167"/>
        <end position="179"/>
    </location>
</feature>
<feature type="compositionally biased region" description="Low complexity" evidence="4">
    <location>
        <begin position="546"/>
        <end position="556"/>
    </location>
</feature>
<feature type="active site" description="Proton acceptor" evidence="2 3">
    <location>
        <position position="293"/>
    </location>
</feature>
<feature type="binding site" evidence="2">
    <location>
        <begin position="74"/>
        <end position="82"/>
    </location>
    <ligand>
        <name>ATP</name>
        <dbReference type="ChEBI" id="CHEBI:30616"/>
    </ligand>
</feature>
<feature type="binding site" evidence="2">
    <location>
        <position position="190"/>
    </location>
    <ligand>
        <name>ATP</name>
        <dbReference type="ChEBI" id="CHEBI:30616"/>
    </ligand>
</feature>
<protein>
    <recommendedName>
        <fullName>Serine/threonine-protein kinase SSN3</fullName>
        <ecNumber>2.7.11.22</ecNumber>
        <ecNumber>2.7.11.23</ecNumber>
    </recommendedName>
    <alternativeName>
        <fullName>Cyclin-dependent kinase 8</fullName>
    </alternativeName>
</protein>
<dbReference type="EC" id="2.7.11.22"/>
<dbReference type="EC" id="2.7.11.23"/>
<dbReference type="EMBL" id="CR380958">
    <property type="protein sequence ID" value="CAG62292.1"/>
    <property type="molecule type" value="Genomic_DNA"/>
</dbReference>
<dbReference type="RefSeq" id="XP_449318.1">
    <property type="nucleotide sequence ID" value="XM_449318.1"/>
</dbReference>
<dbReference type="SMR" id="Q6FKC6"/>
<dbReference type="FunCoup" id="Q6FKC6">
    <property type="interactions" value="1237"/>
</dbReference>
<dbReference type="STRING" id="284593.Q6FKC6"/>
<dbReference type="EnsemblFungi" id="CAGL0L12650g-T">
    <property type="protein sequence ID" value="CAGL0L12650g-T-p1"/>
    <property type="gene ID" value="CAGL0L12650g"/>
</dbReference>
<dbReference type="KEGG" id="cgr:2890604"/>
<dbReference type="CGD" id="CAL0135266">
    <property type="gene designation" value="CAGL0L12650g"/>
</dbReference>
<dbReference type="VEuPathDB" id="FungiDB:CAGL0L12650g"/>
<dbReference type="eggNOG" id="KOG0666">
    <property type="taxonomic scope" value="Eukaryota"/>
</dbReference>
<dbReference type="HOGENOM" id="CLU_000288_181_6_1"/>
<dbReference type="InParanoid" id="Q6FKC6"/>
<dbReference type="OMA" id="IYMVSEF"/>
<dbReference type="Proteomes" id="UP000002428">
    <property type="component" value="Chromosome L"/>
</dbReference>
<dbReference type="GO" id="GO:1990508">
    <property type="term" value="C:CKM complex"/>
    <property type="evidence" value="ECO:0007669"/>
    <property type="project" value="EnsemblFungi"/>
</dbReference>
<dbReference type="GO" id="GO:0016592">
    <property type="term" value="C:mediator complex"/>
    <property type="evidence" value="ECO:0007669"/>
    <property type="project" value="EnsemblFungi"/>
</dbReference>
<dbReference type="GO" id="GO:0005524">
    <property type="term" value="F:ATP binding"/>
    <property type="evidence" value="ECO:0007669"/>
    <property type="project" value="UniProtKB-KW"/>
</dbReference>
<dbReference type="GO" id="GO:0004693">
    <property type="term" value="F:cyclin-dependent protein serine/threonine kinase activity"/>
    <property type="evidence" value="ECO:0007669"/>
    <property type="project" value="UniProtKB-EC"/>
</dbReference>
<dbReference type="GO" id="GO:0046872">
    <property type="term" value="F:metal ion binding"/>
    <property type="evidence" value="ECO:0007669"/>
    <property type="project" value="UniProtKB-KW"/>
</dbReference>
<dbReference type="GO" id="GO:0106310">
    <property type="term" value="F:protein serine kinase activity"/>
    <property type="evidence" value="ECO:0007669"/>
    <property type="project" value="RHEA"/>
</dbReference>
<dbReference type="GO" id="GO:0008353">
    <property type="term" value="F:RNA polymerase II CTD heptapeptide repeat kinase activity"/>
    <property type="evidence" value="ECO:0007669"/>
    <property type="project" value="UniProtKB-EC"/>
</dbReference>
<dbReference type="GO" id="GO:0060258">
    <property type="term" value="P:negative regulation of filamentous growth"/>
    <property type="evidence" value="ECO:0007669"/>
    <property type="project" value="EnsemblFungi"/>
</dbReference>
<dbReference type="GO" id="GO:0000122">
    <property type="term" value="P:negative regulation of transcription by RNA polymerase II"/>
    <property type="evidence" value="ECO:0007669"/>
    <property type="project" value="EnsemblFungi"/>
</dbReference>
<dbReference type="GO" id="GO:0070481">
    <property type="term" value="P:nuclear-transcribed mRNA catabolic process, non-stop decay"/>
    <property type="evidence" value="ECO:0007669"/>
    <property type="project" value="EnsemblFungi"/>
</dbReference>
<dbReference type="GO" id="GO:0045944">
    <property type="term" value="P:positive regulation of transcription by RNA polymerase II"/>
    <property type="evidence" value="ECO:0007669"/>
    <property type="project" value="EnsemblFungi"/>
</dbReference>
<dbReference type="GO" id="GO:0031648">
    <property type="term" value="P:protein destabilization"/>
    <property type="evidence" value="ECO:0007669"/>
    <property type="project" value="EnsemblFungi"/>
</dbReference>
<dbReference type="CDD" id="cd07842">
    <property type="entry name" value="STKc_CDK8_like"/>
    <property type="match status" value="1"/>
</dbReference>
<dbReference type="FunFam" id="1.10.510.10:FF:000408">
    <property type="entry name" value="Serine/threonine-protein kinase SSN3"/>
    <property type="match status" value="1"/>
</dbReference>
<dbReference type="FunFam" id="3.30.200.20:FF:000774">
    <property type="entry name" value="Serine/threonine-protein kinase SSN3"/>
    <property type="match status" value="1"/>
</dbReference>
<dbReference type="Gene3D" id="3.30.200.20">
    <property type="entry name" value="Phosphorylase Kinase, domain 1"/>
    <property type="match status" value="2"/>
</dbReference>
<dbReference type="Gene3D" id="1.10.510.10">
    <property type="entry name" value="Transferase(Phosphotransferase) domain 1"/>
    <property type="match status" value="1"/>
</dbReference>
<dbReference type="InterPro" id="IPR050108">
    <property type="entry name" value="CDK"/>
</dbReference>
<dbReference type="InterPro" id="IPR011009">
    <property type="entry name" value="Kinase-like_dom_sf"/>
</dbReference>
<dbReference type="InterPro" id="IPR000719">
    <property type="entry name" value="Prot_kinase_dom"/>
</dbReference>
<dbReference type="InterPro" id="IPR008271">
    <property type="entry name" value="Ser/Thr_kinase_AS"/>
</dbReference>
<dbReference type="PANTHER" id="PTHR24056">
    <property type="entry name" value="CELL DIVISION PROTEIN KINASE"/>
    <property type="match status" value="1"/>
</dbReference>
<dbReference type="PANTHER" id="PTHR24056:SF495">
    <property type="entry name" value="CYCLIN-DEPENDENT KINASE 8-RELATED"/>
    <property type="match status" value="1"/>
</dbReference>
<dbReference type="Pfam" id="PF00069">
    <property type="entry name" value="Pkinase"/>
    <property type="match status" value="1"/>
</dbReference>
<dbReference type="SMART" id="SM00220">
    <property type="entry name" value="S_TKc"/>
    <property type="match status" value="1"/>
</dbReference>
<dbReference type="SUPFAM" id="SSF56112">
    <property type="entry name" value="Protein kinase-like (PK-like)"/>
    <property type="match status" value="1"/>
</dbReference>
<dbReference type="PROSITE" id="PS50011">
    <property type="entry name" value="PROTEIN_KINASE_DOM"/>
    <property type="match status" value="1"/>
</dbReference>
<dbReference type="PROSITE" id="PS00108">
    <property type="entry name" value="PROTEIN_KINASE_ST"/>
    <property type="match status" value="1"/>
</dbReference>
<name>SSN3_CANGA</name>
<evidence type="ECO:0000250" key="1"/>
<evidence type="ECO:0000255" key="2">
    <source>
        <dbReference type="PROSITE-ProRule" id="PRU00159"/>
    </source>
</evidence>
<evidence type="ECO:0000255" key="3">
    <source>
        <dbReference type="PROSITE-ProRule" id="PRU10027"/>
    </source>
</evidence>
<evidence type="ECO:0000256" key="4">
    <source>
        <dbReference type="SAM" id="MobiDB-lite"/>
    </source>
</evidence>
<evidence type="ECO:0000305" key="5"/>
<accession>Q6FKC6</accession>
<comment type="function">
    <text evidence="1">Component of the SRB8-11 complex. The SRB8-11 complex is a regulatory module of the Mediator complex which is itself involved in regulation of basal and activated RNA polymerase II-dependent transcription. The SRB8-11 complex may be involved in the transcriptional repression of a subset of genes regulated by Mediator. It may inhibit the association of the Mediator complex with RNA polymerase II to form the holoenzyme complex. The SRB8-11 complex phosphorylates the C-terminal domain (CTD) of the largest subunit of RNA polymerase II (By similarity).</text>
</comment>
<comment type="catalytic activity">
    <reaction>
        <text>L-seryl-[protein] + ATP = O-phospho-L-seryl-[protein] + ADP + H(+)</text>
        <dbReference type="Rhea" id="RHEA:17989"/>
        <dbReference type="Rhea" id="RHEA-COMP:9863"/>
        <dbReference type="Rhea" id="RHEA-COMP:11604"/>
        <dbReference type="ChEBI" id="CHEBI:15378"/>
        <dbReference type="ChEBI" id="CHEBI:29999"/>
        <dbReference type="ChEBI" id="CHEBI:30616"/>
        <dbReference type="ChEBI" id="CHEBI:83421"/>
        <dbReference type="ChEBI" id="CHEBI:456216"/>
        <dbReference type="EC" id="2.7.11.22"/>
    </reaction>
</comment>
<comment type="catalytic activity">
    <reaction>
        <text>L-threonyl-[protein] + ATP = O-phospho-L-threonyl-[protein] + ADP + H(+)</text>
        <dbReference type="Rhea" id="RHEA:46608"/>
        <dbReference type="Rhea" id="RHEA-COMP:11060"/>
        <dbReference type="Rhea" id="RHEA-COMP:11605"/>
        <dbReference type="ChEBI" id="CHEBI:15378"/>
        <dbReference type="ChEBI" id="CHEBI:30013"/>
        <dbReference type="ChEBI" id="CHEBI:30616"/>
        <dbReference type="ChEBI" id="CHEBI:61977"/>
        <dbReference type="ChEBI" id="CHEBI:456216"/>
        <dbReference type="EC" id="2.7.11.22"/>
    </reaction>
</comment>
<comment type="catalytic activity">
    <reaction>
        <text>[DNA-directed RNA polymerase] + ATP = phospho-[DNA-directed RNA polymerase] + ADP + H(+)</text>
        <dbReference type="Rhea" id="RHEA:10216"/>
        <dbReference type="Rhea" id="RHEA-COMP:11321"/>
        <dbReference type="Rhea" id="RHEA-COMP:11322"/>
        <dbReference type="ChEBI" id="CHEBI:15378"/>
        <dbReference type="ChEBI" id="CHEBI:30616"/>
        <dbReference type="ChEBI" id="CHEBI:43176"/>
        <dbReference type="ChEBI" id="CHEBI:68546"/>
        <dbReference type="ChEBI" id="CHEBI:456216"/>
        <dbReference type="EC" id="2.7.11.23"/>
    </reaction>
</comment>
<comment type="cofactor">
    <cofactor evidence="1">
        <name>Mg(2+)</name>
        <dbReference type="ChEBI" id="CHEBI:18420"/>
    </cofactor>
</comment>
<comment type="subunit">
    <text evidence="1">Component of the SRB8-11 complex, a regulatory module of the Mediator complex.</text>
</comment>
<comment type="subcellular location">
    <subcellularLocation>
        <location evidence="5">Nucleus</location>
    </subcellularLocation>
</comment>
<comment type="similarity">
    <text evidence="5">Belongs to the protein kinase superfamily. CMGC Ser/Thr protein kinase family. CDC2/CDKX subfamily.</text>
</comment>
<keyword id="KW-0010">Activator</keyword>
<keyword id="KW-0067">ATP-binding</keyword>
<keyword id="KW-0418">Kinase</keyword>
<keyword id="KW-0460">Magnesium</keyword>
<keyword id="KW-0479">Metal-binding</keyword>
<keyword id="KW-0547">Nucleotide-binding</keyword>
<keyword id="KW-0539">Nucleus</keyword>
<keyword id="KW-1185">Reference proteome</keyword>
<keyword id="KW-0678">Repressor</keyword>
<keyword id="KW-0723">Serine/threonine-protein kinase</keyword>
<keyword id="KW-0804">Transcription</keyword>
<keyword id="KW-0805">Transcription regulation</keyword>
<keyword id="KW-0808">Transferase</keyword>